<organism>
    <name type="scientific">Bungarus candidus</name>
    <name type="common">Malayan krait</name>
    <dbReference type="NCBI Taxonomy" id="92438"/>
    <lineage>
        <taxon>Eukaryota</taxon>
        <taxon>Metazoa</taxon>
        <taxon>Chordata</taxon>
        <taxon>Craniata</taxon>
        <taxon>Vertebrata</taxon>
        <taxon>Euteleostomi</taxon>
        <taxon>Lepidosauria</taxon>
        <taxon>Squamata</taxon>
        <taxon>Bifurcata</taxon>
        <taxon>Unidentata</taxon>
        <taxon>Episquamata</taxon>
        <taxon>Toxicofera</taxon>
        <taxon>Serpentes</taxon>
        <taxon>Colubroidea</taxon>
        <taxon>Elapidae</taxon>
        <taxon>Bungarinae</taxon>
        <taxon>Bungarus</taxon>
    </lineage>
</organism>
<comment type="function">
    <text evidence="1">Snake venom phospholipase A2 (PLA2) that shows presynaptic neurotoxicity. The A chain has phospholipase activity. PLA2 catalyzes the calcium-dependent hydrolysis of the 2-acyl groups in 3-sn-phosphoglycerides (By similarity).</text>
</comment>
<comment type="catalytic activity">
    <reaction evidence="5 6">
        <text>a 1,2-diacyl-sn-glycero-3-phosphocholine + H2O = a 1-acyl-sn-glycero-3-phosphocholine + a fatty acid + H(+)</text>
        <dbReference type="Rhea" id="RHEA:15801"/>
        <dbReference type="ChEBI" id="CHEBI:15377"/>
        <dbReference type="ChEBI" id="CHEBI:15378"/>
        <dbReference type="ChEBI" id="CHEBI:28868"/>
        <dbReference type="ChEBI" id="CHEBI:57643"/>
        <dbReference type="ChEBI" id="CHEBI:58168"/>
        <dbReference type="EC" id="3.1.1.4"/>
    </reaction>
</comment>
<comment type="cofactor">
    <cofactor evidence="2">
        <name>Ca(2+)</name>
        <dbReference type="ChEBI" id="CHEBI:29108"/>
    </cofactor>
    <text evidence="2">Binds 1 Ca(2+) ion.</text>
</comment>
<comment type="subunit">
    <text evidence="2">Heterodimer; disulfide-linked. The A chain has phospholipase A2 activity and the B chain shows homology with the basic protease inhibitors.</text>
</comment>
<comment type="subcellular location">
    <subcellularLocation>
        <location evidence="8">Secreted</location>
    </subcellularLocation>
</comment>
<comment type="tissue specificity">
    <text evidence="8">Expressed by the venom gland.</text>
</comment>
<comment type="similarity">
    <text evidence="7">Belongs to the phospholipase A2 family. Group I subfamily. D49 sub-subfamily.</text>
</comment>
<keyword id="KW-0106">Calcium</keyword>
<keyword id="KW-1015">Disulfide bond</keyword>
<keyword id="KW-0378">Hydrolase</keyword>
<keyword id="KW-0442">Lipid degradation</keyword>
<keyword id="KW-0443">Lipid metabolism</keyword>
<keyword id="KW-0479">Metal-binding</keyword>
<keyword id="KW-0528">Neurotoxin</keyword>
<keyword id="KW-0638">Presynaptic neurotoxin</keyword>
<keyword id="KW-0964">Secreted</keyword>
<keyword id="KW-0732">Signal</keyword>
<keyword id="KW-0800">Toxin</keyword>
<sequence length="147" mass="16355">MNPAHLLVLSAVCVSLLGAANIPPHPLNLKNFMEMIRYTIPCEKTWGEYADYGCYCGAGGSGRPIDALDRCCYVHDNCYGDAETKHKCNPKTQSYSYKLTKRTIICYGAAGTCGRIVCDCDRTAALCFGDSEYIERHKNIDTKRHCQ</sequence>
<dbReference type="EC" id="3.1.1.4"/>
<dbReference type="EMBL" id="AB158299">
    <property type="protein sequence ID" value="BAD06267.1"/>
    <property type="molecule type" value="mRNA"/>
</dbReference>
<dbReference type="SMR" id="Q75S51"/>
<dbReference type="GO" id="GO:0005576">
    <property type="term" value="C:extracellular region"/>
    <property type="evidence" value="ECO:0007669"/>
    <property type="project" value="UniProtKB-SubCell"/>
</dbReference>
<dbReference type="GO" id="GO:0005509">
    <property type="term" value="F:calcium ion binding"/>
    <property type="evidence" value="ECO:0007669"/>
    <property type="project" value="InterPro"/>
</dbReference>
<dbReference type="GO" id="GO:0047498">
    <property type="term" value="F:calcium-dependent phospholipase A2 activity"/>
    <property type="evidence" value="ECO:0007669"/>
    <property type="project" value="TreeGrafter"/>
</dbReference>
<dbReference type="GO" id="GO:0005543">
    <property type="term" value="F:phospholipid binding"/>
    <property type="evidence" value="ECO:0007669"/>
    <property type="project" value="TreeGrafter"/>
</dbReference>
<dbReference type="GO" id="GO:0090729">
    <property type="term" value="F:toxin activity"/>
    <property type="evidence" value="ECO:0007669"/>
    <property type="project" value="UniProtKB-KW"/>
</dbReference>
<dbReference type="GO" id="GO:0050482">
    <property type="term" value="P:arachidonate secretion"/>
    <property type="evidence" value="ECO:0007669"/>
    <property type="project" value="InterPro"/>
</dbReference>
<dbReference type="GO" id="GO:0016042">
    <property type="term" value="P:lipid catabolic process"/>
    <property type="evidence" value="ECO:0007669"/>
    <property type="project" value="UniProtKB-KW"/>
</dbReference>
<dbReference type="GO" id="GO:0006644">
    <property type="term" value="P:phospholipid metabolic process"/>
    <property type="evidence" value="ECO:0007669"/>
    <property type="project" value="InterPro"/>
</dbReference>
<dbReference type="CDD" id="cd00125">
    <property type="entry name" value="PLA2c"/>
    <property type="match status" value="1"/>
</dbReference>
<dbReference type="FunFam" id="1.20.90.10:FF:000007">
    <property type="entry name" value="Acidic phospholipase A2"/>
    <property type="match status" value="1"/>
</dbReference>
<dbReference type="Gene3D" id="1.20.90.10">
    <property type="entry name" value="Phospholipase A2 domain"/>
    <property type="match status" value="1"/>
</dbReference>
<dbReference type="InterPro" id="IPR001211">
    <property type="entry name" value="PLipase_A2"/>
</dbReference>
<dbReference type="InterPro" id="IPR033112">
    <property type="entry name" value="PLipase_A2_Asp_AS"/>
</dbReference>
<dbReference type="InterPro" id="IPR016090">
    <property type="entry name" value="PLipase_A2_dom"/>
</dbReference>
<dbReference type="InterPro" id="IPR036444">
    <property type="entry name" value="PLipase_A2_dom_sf"/>
</dbReference>
<dbReference type="InterPro" id="IPR033113">
    <property type="entry name" value="PLipase_A2_His_AS"/>
</dbReference>
<dbReference type="PANTHER" id="PTHR11716:SF100">
    <property type="entry name" value="PHOSPHOLIPASE A2"/>
    <property type="match status" value="1"/>
</dbReference>
<dbReference type="PANTHER" id="PTHR11716">
    <property type="entry name" value="PHOSPHOLIPASE A2 FAMILY MEMBER"/>
    <property type="match status" value="1"/>
</dbReference>
<dbReference type="Pfam" id="PF00068">
    <property type="entry name" value="Phospholip_A2_1"/>
    <property type="match status" value="1"/>
</dbReference>
<dbReference type="PRINTS" id="PR00389">
    <property type="entry name" value="PHPHLIPASEA2"/>
</dbReference>
<dbReference type="SMART" id="SM00085">
    <property type="entry name" value="PA2c"/>
    <property type="match status" value="1"/>
</dbReference>
<dbReference type="SUPFAM" id="SSF48619">
    <property type="entry name" value="Phospholipase A2, PLA2"/>
    <property type="match status" value="1"/>
</dbReference>
<dbReference type="PROSITE" id="PS00119">
    <property type="entry name" value="PA2_ASP"/>
    <property type="match status" value="1"/>
</dbReference>
<dbReference type="PROSITE" id="PS00118">
    <property type="entry name" value="PA2_HIS"/>
    <property type="match status" value="1"/>
</dbReference>
<evidence type="ECO:0000250" key="1"/>
<evidence type="ECO:0000250" key="2">
    <source>
        <dbReference type="UniProtKB" id="P00617"/>
    </source>
</evidence>
<evidence type="ECO:0000250" key="3">
    <source>
        <dbReference type="UniProtKB" id="P14418"/>
    </source>
</evidence>
<evidence type="ECO:0000255" key="4"/>
<evidence type="ECO:0000255" key="5">
    <source>
        <dbReference type="PROSITE-ProRule" id="PRU10035"/>
    </source>
</evidence>
<evidence type="ECO:0000255" key="6">
    <source>
        <dbReference type="PROSITE-ProRule" id="PRU10036"/>
    </source>
</evidence>
<evidence type="ECO:0000305" key="7"/>
<evidence type="ECO:0000305" key="8">
    <source>
    </source>
</evidence>
<feature type="signal peptide" evidence="4">
    <location>
        <begin position="1"/>
        <end position="19"/>
    </location>
</feature>
<feature type="propeptide" id="PRO_0000271453" evidence="2">
    <location>
        <begin position="20"/>
        <end position="27"/>
    </location>
</feature>
<feature type="chain" id="PRO_5000051027" description="Basic phospholipase A2 beta-bungarotoxin A4 chain" evidence="2">
    <location>
        <begin position="28"/>
        <end position="147"/>
    </location>
</feature>
<feature type="active site" evidence="3">
    <location>
        <position position="75"/>
    </location>
</feature>
<feature type="active site" evidence="3">
    <location>
        <position position="121"/>
    </location>
</feature>
<feature type="binding site" evidence="2">
    <location>
        <position position="55"/>
    </location>
    <ligand>
        <name>Ca(2+)</name>
        <dbReference type="ChEBI" id="CHEBI:29108"/>
    </ligand>
</feature>
<feature type="binding site" evidence="2">
    <location>
        <position position="57"/>
    </location>
    <ligand>
        <name>Ca(2+)</name>
        <dbReference type="ChEBI" id="CHEBI:29108"/>
    </ligand>
</feature>
<feature type="binding site" evidence="2">
    <location>
        <position position="59"/>
    </location>
    <ligand>
        <name>Ca(2+)</name>
        <dbReference type="ChEBI" id="CHEBI:29108"/>
    </ligand>
</feature>
<feature type="binding site" evidence="2">
    <location>
        <position position="76"/>
    </location>
    <ligand>
        <name>Ca(2+)</name>
        <dbReference type="ChEBI" id="CHEBI:29108"/>
    </ligand>
</feature>
<feature type="disulfide bond" description="Interchain (with a B chain)" evidence="2">
    <location>
        <position position="42"/>
    </location>
</feature>
<feature type="disulfide bond" evidence="2">
    <location>
        <begin position="54"/>
        <end position="146"/>
    </location>
</feature>
<feature type="disulfide bond" evidence="2">
    <location>
        <begin position="56"/>
        <end position="72"/>
    </location>
</feature>
<feature type="disulfide bond" evidence="2">
    <location>
        <begin position="71"/>
        <end position="127"/>
    </location>
</feature>
<feature type="disulfide bond" evidence="2">
    <location>
        <begin position="78"/>
        <end position="120"/>
    </location>
</feature>
<feature type="disulfide bond" evidence="2">
    <location>
        <begin position="88"/>
        <end position="113"/>
    </location>
</feature>
<feature type="disulfide bond" evidence="2">
    <location>
        <begin position="106"/>
        <end position="118"/>
    </location>
</feature>
<name>PA2B4_BUNCA</name>
<reference key="1">
    <citation type="journal article" date="2006" name="Toxicon">
        <title>Molecular cloning of the major lethal toxins from two kraits (Bungarus flaviceps and Bungarus candidus).</title>
        <authorList>
            <person name="Yanoshita R."/>
            <person name="Ogawa Y."/>
            <person name="Murayama N."/>
            <person name="Omori-Satoh T."/>
            <person name="Saguchi K."/>
            <person name="Higuchi S."/>
            <person name="Khow O."/>
            <person name="Chanhome L."/>
            <person name="Samejima Y."/>
            <person name="Sitprija V."/>
        </authorList>
    </citation>
    <scope>NUCLEOTIDE SEQUENCE [MRNA]</scope>
    <source>
        <tissue>Venom gland</tissue>
    </source>
</reference>
<accession>Q75S51</accession>
<proteinExistence type="evidence at transcript level"/>
<protein>
    <recommendedName>
        <fullName>Basic phospholipase A2 beta-bungarotoxin A4 chain</fullName>
        <shortName>Beta-BuTX A4 chain</shortName>
        <shortName>svPLA2</shortName>
        <ecNumber>3.1.1.4</ecNumber>
    </recommendedName>
    <alternativeName>
        <fullName>Phosphatidylcholine 2-acylhydrolase</fullName>
    </alternativeName>
</protein>